<proteinExistence type="inferred from homology"/>
<protein>
    <recommendedName>
        <fullName evidence="1">Adenine deaminase</fullName>
        <shortName evidence="1">Adenase</shortName>
        <shortName evidence="1">Adenine aminase</shortName>
        <ecNumber evidence="1">3.5.4.2</ecNumber>
    </recommendedName>
</protein>
<keyword id="KW-0378">Hydrolase</keyword>
<keyword id="KW-0464">Manganese</keyword>
<keyword id="KW-1185">Reference proteome</keyword>
<dbReference type="EC" id="3.5.4.2" evidence="1"/>
<dbReference type="EMBL" id="CP001389">
    <property type="protein sequence ID" value="ACP26129.1"/>
    <property type="molecule type" value="Genomic_DNA"/>
</dbReference>
<dbReference type="RefSeq" id="WP_012708887.1">
    <property type="nucleotide sequence ID" value="NC_012587.1"/>
</dbReference>
<dbReference type="RefSeq" id="YP_002826882.1">
    <property type="nucleotide sequence ID" value="NC_012587.1"/>
</dbReference>
<dbReference type="SMR" id="C3MG57"/>
<dbReference type="STRING" id="394.NGR_c23700"/>
<dbReference type="KEGG" id="rhi:NGR_c23700"/>
<dbReference type="PATRIC" id="fig|394.7.peg.5189"/>
<dbReference type="eggNOG" id="COG1001">
    <property type="taxonomic scope" value="Bacteria"/>
</dbReference>
<dbReference type="HOGENOM" id="CLU_027935_0_0_5"/>
<dbReference type="OrthoDB" id="9775607at2"/>
<dbReference type="Proteomes" id="UP000001054">
    <property type="component" value="Chromosome"/>
</dbReference>
<dbReference type="GO" id="GO:0000034">
    <property type="term" value="F:adenine deaminase activity"/>
    <property type="evidence" value="ECO:0007669"/>
    <property type="project" value="UniProtKB-UniRule"/>
</dbReference>
<dbReference type="GO" id="GO:0006146">
    <property type="term" value="P:adenine catabolic process"/>
    <property type="evidence" value="ECO:0007669"/>
    <property type="project" value="InterPro"/>
</dbReference>
<dbReference type="CDD" id="cd01295">
    <property type="entry name" value="AdeC"/>
    <property type="match status" value="1"/>
</dbReference>
<dbReference type="Gene3D" id="3.20.20.140">
    <property type="entry name" value="Metal-dependent hydrolases"/>
    <property type="match status" value="1"/>
</dbReference>
<dbReference type="Gene3D" id="2.30.40.10">
    <property type="entry name" value="Urease, subunit C, domain 1"/>
    <property type="match status" value="1"/>
</dbReference>
<dbReference type="HAMAP" id="MF_01518">
    <property type="entry name" value="Adenine_deamin"/>
    <property type="match status" value="1"/>
</dbReference>
<dbReference type="InterPro" id="IPR006679">
    <property type="entry name" value="Adenine_deam"/>
</dbReference>
<dbReference type="InterPro" id="IPR026912">
    <property type="entry name" value="Adenine_deam_C"/>
</dbReference>
<dbReference type="InterPro" id="IPR006680">
    <property type="entry name" value="Amidohydro-rel"/>
</dbReference>
<dbReference type="InterPro" id="IPR011059">
    <property type="entry name" value="Metal-dep_hydrolase_composite"/>
</dbReference>
<dbReference type="InterPro" id="IPR032466">
    <property type="entry name" value="Metal_Hydrolase"/>
</dbReference>
<dbReference type="NCBIfam" id="TIGR01178">
    <property type="entry name" value="ade"/>
    <property type="match status" value="1"/>
</dbReference>
<dbReference type="PANTHER" id="PTHR11113:SF2">
    <property type="entry name" value="ADENINE DEAMINASE"/>
    <property type="match status" value="1"/>
</dbReference>
<dbReference type="PANTHER" id="PTHR11113">
    <property type="entry name" value="N-ACETYLGLUCOSAMINE-6-PHOSPHATE DEACETYLASE"/>
    <property type="match status" value="1"/>
</dbReference>
<dbReference type="Pfam" id="PF13382">
    <property type="entry name" value="Adenine_deam_C"/>
    <property type="match status" value="1"/>
</dbReference>
<dbReference type="Pfam" id="PF01979">
    <property type="entry name" value="Amidohydro_1"/>
    <property type="match status" value="1"/>
</dbReference>
<dbReference type="SUPFAM" id="SSF51338">
    <property type="entry name" value="Composite domain of metallo-dependent hydrolases"/>
    <property type="match status" value="1"/>
</dbReference>
<dbReference type="SUPFAM" id="SSF51556">
    <property type="entry name" value="Metallo-dependent hydrolases"/>
    <property type="match status" value="1"/>
</dbReference>
<gene>
    <name evidence="1" type="primary">ade</name>
    <name type="ordered locus">NGR_c23700</name>
</gene>
<organism>
    <name type="scientific">Sinorhizobium fredii (strain NBRC 101917 / NGR234)</name>
    <dbReference type="NCBI Taxonomy" id="394"/>
    <lineage>
        <taxon>Bacteria</taxon>
        <taxon>Pseudomonadati</taxon>
        <taxon>Pseudomonadota</taxon>
        <taxon>Alphaproteobacteria</taxon>
        <taxon>Hyphomicrobiales</taxon>
        <taxon>Rhizobiaceae</taxon>
        <taxon>Sinorhizobium/Ensifer group</taxon>
        <taxon>Sinorhizobium</taxon>
    </lineage>
</organism>
<sequence length="565" mass="60956">MSEALERFIDQGIGRKPADIVLKGGRFFDLVTGELVASDIAISGDRIVGTCGDYEGREEIDVSGRIVVPGFIDTHLHIESSLVTPHEFDRCVLPLGITTAICDPHEIANVLGTEGIQFFLDSAMETIMDIRVQLSSCVPATHLETAGADLPIERLTPFRHHPKVIGLAEFMNFPGVIHKDPICLAKLDAFQGGHIDGHAPLLRGKELNGYLATGIRTDHECTSAEEALEKIRKGMHILVREGSVSKDLQALMPIITERLSPHLALCTDDRNPLDIAEQGHLDHMIRTAIAAGVEPLAIYRAASISAARAFGLSDRGLVAPGWRADLVVLDSLENCKAEMVFSGGRRVTDALFARRKPVEPVGLDSVKAREVKAADFGVPYSEVETSVIGVLPGKIITEHRRYRLPAVGNQTGPDLGRDIIKVAVIERHGVNGNHANGFVQGFGLKKGAIASTVGHDSHNICVVGVSEEDMALAANRLGAIKGGFVVVEDGRVTGEIALPIAGLMSLEPYERVRDILHHLRQAAFALGATLEEPFLQLAFLPLPVIPHLKISDRGLVDVDKFALIG</sequence>
<comment type="catalytic activity">
    <reaction evidence="1">
        <text>adenine + H2O + H(+) = hypoxanthine + NH4(+)</text>
        <dbReference type="Rhea" id="RHEA:23688"/>
        <dbReference type="ChEBI" id="CHEBI:15377"/>
        <dbReference type="ChEBI" id="CHEBI:15378"/>
        <dbReference type="ChEBI" id="CHEBI:16708"/>
        <dbReference type="ChEBI" id="CHEBI:17368"/>
        <dbReference type="ChEBI" id="CHEBI:28938"/>
        <dbReference type="EC" id="3.5.4.2"/>
    </reaction>
</comment>
<comment type="cofactor">
    <cofactor evidence="1">
        <name>Mn(2+)</name>
        <dbReference type="ChEBI" id="CHEBI:29035"/>
    </cofactor>
</comment>
<comment type="similarity">
    <text evidence="1">Belongs to the metallo-dependent hydrolases superfamily. Adenine deaminase family.</text>
</comment>
<reference key="1">
    <citation type="journal article" date="2009" name="Appl. Environ. Microbiol.">
        <title>Rhizobium sp. strain NGR234 possesses a remarkable number of secretion systems.</title>
        <authorList>
            <person name="Schmeisser C."/>
            <person name="Liesegang H."/>
            <person name="Krysciak D."/>
            <person name="Bakkou N."/>
            <person name="Le Quere A."/>
            <person name="Wollherr A."/>
            <person name="Heinemeyer I."/>
            <person name="Morgenstern B."/>
            <person name="Pommerening-Roeser A."/>
            <person name="Flores M."/>
            <person name="Palacios R."/>
            <person name="Brenner S."/>
            <person name="Gottschalk G."/>
            <person name="Schmitz R.A."/>
            <person name="Broughton W.J."/>
            <person name="Perret X."/>
            <person name="Strittmatter A.W."/>
            <person name="Streit W.R."/>
        </authorList>
    </citation>
    <scope>NUCLEOTIDE SEQUENCE [LARGE SCALE GENOMIC DNA]</scope>
    <source>
        <strain>NBRC 101917 / NGR234</strain>
    </source>
</reference>
<name>ADEC_SINFN</name>
<accession>C3MG57</accession>
<feature type="chain" id="PRO_1000185090" description="Adenine deaminase">
    <location>
        <begin position="1"/>
        <end position="565"/>
    </location>
</feature>
<evidence type="ECO:0000255" key="1">
    <source>
        <dbReference type="HAMAP-Rule" id="MF_01518"/>
    </source>
</evidence>